<comment type="function">
    <text evidence="2 3">In muscle, parvalbumin is thought to be involved in relaxation after contraction. It binds two calcium ions (By similarity).</text>
</comment>
<comment type="miscellaneous">
    <text evidence="2 6">Is regarded as an important allergen.</text>
</comment>
<comment type="miscellaneous">
    <text evidence="6">On the 2D-gel the determined pI of this protein is: 3.79, its MW is: 11.32 kDa.</text>
</comment>
<comment type="similarity">
    <text evidence="4">Belongs to the parvalbumin family.</text>
</comment>
<accession>P86770</accession>
<sequence>AFAGVLADADIKAALAGCAAAESFNYKTFFKACGLAGKFFAIIDQDHSGFIEEDELKLFLQTFSAGARALSDAETKDVDGDGMIGVDEFVALVKA</sequence>
<reference evidence="8" key="1">
    <citation type="journal article" date="2010" name="J. Proteome Res.">
        <title>Extensive de novo sequencing of new parvalbumin isoforms using a novel combination of bottom-up proteomics, accurate molecular mass measurement by FTICR-MS, and selected MS/MS ion monitoring.</title>
        <authorList>
            <person name="Carrera M."/>
            <person name="Canas B."/>
            <person name="Vazquez J."/>
            <person name="Gallardo J.M."/>
        </authorList>
    </citation>
    <scope>PROTEIN SEQUENCE</scope>
    <scope>ACETYLATION AT ALA-1</scope>
    <source>
        <tissue evidence="6">Muscle</tissue>
    </source>
</reference>
<proteinExistence type="evidence at protein level"/>
<evidence type="ECO:0000250" key="1">
    <source>
        <dbReference type="UniProtKB" id="P02621"/>
    </source>
</evidence>
<evidence type="ECO:0000250" key="2">
    <source>
        <dbReference type="UniProtKB" id="P02622"/>
    </source>
</evidence>
<evidence type="ECO:0000250" key="3">
    <source>
        <dbReference type="UniProtKB" id="P02624"/>
    </source>
</evidence>
<evidence type="ECO:0000255" key="4"/>
<evidence type="ECO:0000255" key="5">
    <source>
        <dbReference type="PROSITE-ProRule" id="PRU00448"/>
    </source>
</evidence>
<evidence type="ECO:0000269" key="6">
    <source>
    </source>
</evidence>
<evidence type="ECO:0000303" key="7">
    <source>
    </source>
</evidence>
<evidence type="ECO:0000305" key="8"/>
<dbReference type="SMR" id="P86770"/>
<dbReference type="iPTMnet" id="P86770"/>
<dbReference type="GO" id="GO:0005737">
    <property type="term" value="C:cytoplasm"/>
    <property type="evidence" value="ECO:0007669"/>
    <property type="project" value="TreeGrafter"/>
</dbReference>
<dbReference type="GO" id="GO:0005509">
    <property type="term" value="F:calcium ion binding"/>
    <property type="evidence" value="ECO:0007669"/>
    <property type="project" value="InterPro"/>
</dbReference>
<dbReference type="Gene3D" id="1.10.238.10">
    <property type="entry name" value="EF-hand"/>
    <property type="match status" value="1"/>
</dbReference>
<dbReference type="InterPro" id="IPR011992">
    <property type="entry name" value="EF-hand-dom_pair"/>
</dbReference>
<dbReference type="InterPro" id="IPR018247">
    <property type="entry name" value="EF_Hand_1_Ca_BS"/>
</dbReference>
<dbReference type="InterPro" id="IPR002048">
    <property type="entry name" value="EF_hand_dom"/>
</dbReference>
<dbReference type="InterPro" id="IPR008080">
    <property type="entry name" value="Parvalbumin"/>
</dbReference>
<dbReference type="PANTHER" id="PTHR11653:SF12">
    <property type="entry name" value="PARVALBUMIN"/>
    <property type="match status" value="1"/>
</dbReference>
<dbReference type="PANTHER" id="PTHR11653">
    <property type="entry name" value="PARVALBUMIN ALPHA"/>
    <property type="match status" value="1"/>
</dbReference>
<dbReference type="Pfam" id="PF13499">
    <property type="entry name" value="EF-hand_7"/>
    <property type="match status" value="1"/>
</dbReference>
<dbReference type="PRINTS" id="PR01697">
    <property type="entry name" value="PARVALBUMIN"/>
</dbReference>
<dbReference type="SUPFAM" id="SSF47473">
    <property type="entry name" value="EF-hand"/>
    <property type="match status" value="1"/>
</dbReference>
<dbReference type="PROSITE" id="PS00018">
    <property type="entry name" value="EF_HAND_1"/>
    <property type="match status" value="2"/>
</dbReference>
<dbReference type="PROSITE" id="PS50222">
    <property type="entry name" value="EF_HAND_2"/>
    <property type="match status" value="2"/>
</dbReference>
<keyword id="KW-0007">Acetylation</keyword>
<keyword id="KW-0020">Allergen</keyword>
<keyword id="KW-0106">Calcium</keyword>
<keyword id="KW-0903">Direct protein sequencing</keyword>
<keyword id="KW-0479">Metal-binding</keyword>
<keyword id="KW-0514">Muscle protein</keyword>
<keyword id="KW-0677">Repeat</keyword>
<name>PRVB3_MERPA</name>
<protein>
    <recommendedName>
        <fullName evidence="7">Parvalbumin beta 3</fullName>
    </recommendedName>
</protein>
<feature type="chain" id="PRO_0000399430" description="Parvalbumin beta 3">
    <location>
        <begin position="1"/>
        <end position="95" status="greater than"/>
    </location>
</feature>
<feature type="domain" description="EF-hand 1" evidence="5">
    <location>
        <begin position="39"/>
        <end position="66"/>
    </location>
</feature>
<feature type="domain" description="EF-hand 2" evidence="5">
    <location>
        <begin position="77"/>
        <end position="95" status="greater than"/>
    </location>
</feature>
<feature type="binding site" evidence="1 5">
    <location>
        <position position="44"/>
    </location>
    <ligand>
        <name>Ca(2+)</name>
        <dbReference type="ChEBI" id="CHEBI:29108"/>
        <label>1</label>
    </ligand>
</feature>
<feature type="binding site" evidence="1 5">
    <location>
        <position position="46"/>
    </location>
    <ligand>
        <name>Ca(2+)</name>
        <dbReference type="ChEBI" id="CHEBI:29108"/>
        <label>1</label>
    </ligand>
</feature>
<feature type="binding site" evidence="1 5">
    <location>
        <position position="48"/>
    </location>
    <ligand>
        <name>Ca(2+)</name>
        <dbReference type="ChEBI" id="CHEBI:29108"/>
        <label>1</label>
    </ligand>
</feature>
<feature type="binding site" evidence="1">
    <location>
        <position position="50"/>
    </location>
    <ligand>
        <name>Ca(2+)</name>
        <dbReference type="ChEBI" id="CHEBI:29108"/>
        <label>1</label>
    </ligand>
</feature>
<feature type="binding site" evidence="1">
    <location>
        <position position="52"/>
    </location>
    <ligand>
        <name>Ca(2+)</name>
        <dbReference type="ChEBI" id="CHEBI:29108"/>
        <label>1</label>
    </ligand>
</feature>
<feature type="binding site" evidence="1 5">
    <location>
        <position position="55"/>
    </location>
    <ligand>
        <name>Ca(2+)</name>
        <dbReference type="ChEBI" id="CHEBI:29108"/>
        <label>1</label>
    </ligand>
</feature>
<feature type="binding site" evidence="1 5">
    <location>
        <position position="77"/>
    </location>
    <ligand>
        <name>Ca(2+)</name>
        <dbReference type="ChEBI" id="CHEBI:29108"/>
        <label>2</label>
    </ligand>
</feature>
<feature type="binding site" evidence="1 5">
    <location>
        <position position="79"/>
    </location>
    <ligand>
        <name>Ca(2+)</name>
        <dbReference type="ChEBI" id="CHEBI:29108"/>
        <label>2</label>
    </ligand>
</feature>
<feature type="binding site" evidence="1 5">
    <location>
        <position position="81"/>
    </location>
    <ligand>
        <name>Ca(2+)</name>
        <dbReference type="ChEBI" id="CHEBI:29108"/>
        <label>2</label>
    </ligand>
</feature>
<feature type="binding site" evidence="5">
    <location>
        <position position="83"/>
    </location>
    <ligand>
        <name>Ca(2+)</name>
        <dbReference type="ChEBI" id="CHEBI:29108"/>
        <label>2</label>
    </ligand>
</feature>
<feature type="binding site" evidence="1 5">
    <location>
        <position position="88"/>
    </location>
    <ligand>
        <name>Ca(2+)</name>
        <dbReference type="ChEBI" id="CHEBI:29108"/>
        <label>2</label>
    </ligand>
</feature>
<feature type="modified residue" description="N-acetylalanine" evidence="6">
    <location>
        <position position="1"/>
    </location>
</feature>
<feature type="unsure residue" description="L or I" evidence="6">
    <location>
        <position position="6"/>
    </location>
</feature>
<feature type="unsure residue" description="I or L" evidence="6">
    <location>
        <position position="11"/>
    </location>
</feature>
<feature type="unsure residue" description="K or Q" evidence="6">
    <location>
        <position position="12"/>
    </location>
</feature>
<feature type="unsure residue" description="L or I" evidence="6">
    <location>
        <position position="15"/>
    </location>
</feature>
<feature type="unsure residue" description="K or Q" evidence="6">
    <location>
        <position position="27"/>
    </location>
</feature>
<feature type="unsure residue" description="K or Q" evidence="6">
    <location>
        <position position="31"/>
    </location>
</feature>
<feature type="unsure residue" description="L or I" evidence="6">
    <location>
        <position position="35"/>
    </location>
</feature>
<feature type="unsure residue" description="K or Q" evidence="6">
    <location>
        <position position="38"/>
    </location>
</feature>
<feature type="unsure residue" description="I or L" evidence="6">
    <location>
        <position position="42"/>
    </location>
</feature>
<feature type="unsure residue" description="I or L" evidence="6">
    <location>
        <position position="43"/>
    </location>
</feature>
<feature type="unsure residue" description="Q or K" evidence="6">
    <location>
        <position position="45"/>
    </location>
</feature>
<feature type="unsure residue" description="I or L" evidence="6">
    <location>
        <position position="51"/>
    </location>
</feature>
<feature type="unsure residue" description="L or I" evidence="6">
    <location>
        <position position="56"/>
    </location>
</feature>
<feature type="unsure residue" description="K or Q" evidence="6">
    <location>
        <position position="57"/>
    </location>
</feature>
<feature type="unsure residue" description="L or I" evidence="6">
    <location>
        <position position="58"/>
    </location>
</feature>
<feature type="unsure residue" description="L or I" evidence="6">
    <location>
        <position position="60"/>
    </location>
</feature>
<feature type="unsure residue" description="Q or K" evidence="6">
    <location>
        <position position="61"/>
    </location>
</feature>
<feature type="unsure residue" description="L or I" evidence="6">
    <location>
        <position position="70"/>
    </location>
</feature>
<feature type="unsure residue" description="K or Q" evidence="6">
    <location>
        <position position="76"/>
    </location>
</feature>
<feature type="unsure residue" description="I or L" evidence="6">
    <location>
        <position position="84"/>
    </location>
</feature>
<feature type="unsure residue" description="L or I" evidence="6">
    <location>
        <position position="92"/>
    </location>
</feature>
<feature type="unsure residue" description="K or Q" evidence="6">
    <location>
        <position position="94"/>
    </location>
</feature>
<feature type="non-consecutive residues" evidence="7">
    <location>
        <begin position="38"/>
        <end position="39"/>
    </location>
</feature>
<feature type="non-consecutive residues" evidence="7">
    <location>
        <begin position="76"/>
        <end position="77"/>
    </location>
</feature>
<feature type="non-terminal residue" evidence="7">
    <location>
        <position position="95"/>
    </location>
</feature>
<organism>
    <name type="scientific">Merluccius paradoxus</name>
    <name type="common">Deep-water Cape hake</name>
    <name type="synonym">Merluccius capensis paradoxus</name>
    <dbReference type="NCBI Taxonomy" id="89950"/>
    <lineage>
        <taxon>Eukaryota</taxon>
        <taxon>Metazoa</taxon>
        <taxon>Chordata</taxon>
        <taxon>Craniata</taxon>
        <taxon>Vertebrata</taxon>
        <taxon>Euteleostomi</taxon>
        <taxon>Actinopterygii</taxon>
        <taxon>Neopterygii</taxon>
        <taxon>Teleostei</taxon>
        <taxon>Neoteleostei</taxon>
        <taxon>Acanthomorphata</taxon>
        <taxon>Zeiogadaria</taxon>
        <taxon>Gadariae</taxon>
        <taxon>Gadiformes</taxon>
        <taxon>Gadoidei</taxon>
        <taxon>Merlucciidae</taxon>
        <taxon>Merluccius</taxon>
    </lineage>
</organism>